<reference key="1">
    <citation type="journal article" date="2004" name="Proc. Natl. Acad. Sci. U.S.A.">
        <title>Insights into the evolution of Yersinia pestis through whole-genome comparison with Yersinia pseudotuberculosis.</title>
        <authorList>
            <person name="Chain P.S.G."/>
            <person name="Carniel E."/>
            <person name="Larimer F.W."/>
            <person name="Lamerdin J."/>
            <person name="Stoutland P.O."/>
            <person name="Regala W.M."/>
            <person name="Georgescu A.M."/>
            <person name="Vergez L.M."/>
            <person name="Land M.L."/>
            <person name="Motin V.L."/>
            <person name="Brubaker R.R."/>
            <person name="Fowler J."/>
            <person name="Hinnebusch J."/>
            <person name="Marceau M."/>
            <person name="Medigue C."/>
            <person name="Simonet M."/>
            <person name="Chenal-Francisque V."/>
            <person name="Souza B."/>
            <person name="Dacheux D."/>
            <person name="Elliott J.M."/>
            <person name="Derbise A."/>
            <person name="Hauser L.J."/>
            <person name="Garcia E."/>
        </authorList>
    </citation>
    <scope>NUCLEOTIDE SEQUENCE [LARGE SCALE GENOMIC DNA]</scope>
    <source>
        <strain>IP32953</strain>
    </source>
</reference>
<evidence type="ECO:0000255" key="1">
    <source>
        <dbReference type="HAMAP-Rule" id="MF_00003"/>
    </source>
</evidence>
<keyword id="KW-0963">Cytoplasm</keyword>
<keyword id="KW-0690">Ribosome biogenesis</keyword>
<sequence length="136" mass="15263">MAKEFSRSQRVSQEMQKEIALILQREIKDPRVGMATVSGIELSRDLAYAKVFVTFLNVLTDNADPDTVKNGIKALQDASGYIRTLLGKAMRLRIVPELTFAYDNSLIEGMRMSNLVSNVIKNDVERQVNPGSDEEK</sequence>
<gene>
    <name evidence="1" type="primary">rbfA</name>
    <name type="ordered locus">YPTB0481</name>
</gene>
<organism>
    <name type="scientific">Yersinia pseudotuberculosis serotype I (strain IP32953)</name>
    <dbReference type="NCBI Taxonomy" id="273123"/>
    <lineage>
        <taxon>Bacteria</taxon>
        <taxon>Pseudomonadati</taxon>
        <taxon>Pseudomonadota</taxon>
        <taxon>Gammaproteobacteria</taxon>
        <taxon>Enterobacterales</taxon>
        <taxon>Yersiniaceae</taxon>
        <taxon>Yersinia</taxon>
    </lineage>
</organism>
<accession>Q66F59</accession>
<feature type="chain" id="PRO_0000102779" description="Ribosome-binding factor A">
    <location>
        <begin position="1"/>
        <end position="136"/>
    </location>
</feature>
<name>RBFA_YERPS</name>
<comment type="function">
    <text evidence="1">One of several proteins that assist in the late maturation steps of the functional core of the 30S ribosomal subunit. Associates with free 30S ribosomal subunits (but not with 30S subunits that are part of 70S ribosomes or polysomes). Required for efficient processing of 16S rRNA. May interact with the 5'-terminal helix region of 16S rRNA.</text>
</comment>
<comment type="subunit">
    <text evidence="1">Monomer. Binds 30S ribosomal subunits, but not 50S ribosomal subunits or 70S ribosomes.</text>
</comment>
<comment type="subcellular location">
    <subcellularLocation>
        <location evidence="1">Cytoplasm</location>
    </subcellularLocation>
</comment>
<comment type="similarity">
    <text evidence="1">Belongs to the RbfA family.</text>
</comment>
<protein>
    <recommendedName>
        <fullName evidence="1">Ribosome-binding factor A</fullName>
    </recommendedName>
</protein>
<proteinExistence type="inferred from homology"/>
<dbReference type="EMBL" id="BX936398">
    <property type="protein sequence ID" value="CAH19721.1"/>
    <property type="molecule type" value="Genomic_DNA"/>
</dbReference>
<dbReference type="RefSeq" id="WP_002209255.1">
    <property type="nucleotide sequence ID" value="NZ_CP009712.1"/>
</dbReference>
<dbReference type="SMR" id="Q66F59"/>
<dbReference type="GeneID" id="96663988"/>
<dbReference type="KEGG" id="ypo:BZ17_2082"/>
<dbReference type="KEGG" id="yps:YPTB0481"/>
<dbReference type="PATRIC" id="fig|273123.14.peg.2210"/>
<dbReference type="Proteomes" id="UP000001011">
    <property type="component" value="Chromosome"/>
</dbReference>
<dbReference type="GO" id="GO:0005829">
    <property type="term" value="C:cytosol"/>
    <property type="evidence" value="ECO:0007669"/>
    <property type="project" value="TreeGrafter"/>
</dbReference>
<dbReference type="GO" id="GO:0043024">
    <property type="term" value="F:ribosomal small subunit binding"/>
    <property type="evidence" value="ECO:0007669"/>
    <property type="project" value="TreeGrafter"/>
</dbReference>
<dbReference type="GO" id="GO:0030490">
    <property type="term" value="P:maturation of SSU-rRNA"/>
    <property type="evidence" value="ECO:0007669"/>
    <property type="project" value="UniProtKB-UniRule"/>
</dbReference>
<dbReference type="FunFam" id="3.30.300.20:FF:000007">
    <property type="entry name" value="Ribosome-binding factor A"/>
    <property type="match status" value="1"/>
</dbReference>
<dbReference type="Gene3D" id="3.30.300.20">
    <property type="match status" value="1"/>
</dbReference>
<dbReference type="HAMAP" id="MF_00003">
    <property type="entry name" value="RbfA"/>
    <property type="match status" value="1"/>
</dbReference>
<dbReference type="InterPro" id="IPR015946">
    <property type="entry name" value="KH_dom-like_a/b"/>
</dbReference>
<dbReference type="InterPro" id="IPR000238">
    <property type="entry name" value="RbfA"/>
</dbReference>
<dbReference type="InterPro" id="IPR023799">
    <property type="entry name" value="RbfA_dom_sf"/>
</dbReference>
<dbReference type="InterPro" id="IPR020053">
    <property type="entry name" value="Ribosome-bd_factorA_CS"/>
</dbReference>
<dbReference type="NCBIfam" id="TIGR00082">
    <property type="entry name" value="rbfA"/>
    <property type="match status" value="1"/>
</dbReference>
<dbReference type="PANTHER" id="PTHR33515">
    <property type="entry name" value="RIBOSOME-BINDING FACTOR A, CHLOROPLASTIC-RELATED"/>
    <property type="match status" value="1"/>
</dbReference>
<dbReference type="PANTHER" id="PTHR33515:SF1">
    <property type="entry name" value="RIBOSOME-BINDING FACTOR A, CHLOROPLASTIC-RELATED"/>
    <property type="match status" value="1"/>
</dbReference>
<dbReference type="Pfam" id="PF02033">
    <property type="entry name" value="RBFA"/>
    <property type="match status" value="1"/>
</dbReference>
<dbReference type="SUPFAM" id="SSF89919">
    <property type="entry name" value="Ribosome-binding factor A, RbfA"/>
    <property type="match status" value="1"/>
</dbReference>
<dbReference type="PROSITE" id="PS01319">
    <property type="entry name" value="RBFA"/>
    <property type="match status" value="1"/>
</dbReference>